<feature type="signal peptide" evidence="1">
    <location>
        <begin position="1"/>
        <end position="18"/>
    </location>
</feature>
<feature type="chain" id="PRO_0000014321" description="Uncharacterized protein YGL149W">
    <location>
        <begin position="19"/>
        <end position="101"/>
    </location>
</feature>
<feature type="transmembrane region" description="Helical" evidence="1">
    <location>
        <begin position="62"/>
        <end position="82"/>
    </location>
</feature>
<gene>
    <name type="ordered locus">YGL149W</name>
    <name type="ORF">G1895</name>
</gene>
<evidence type="ECO:0000255" key="1"/>
<evidence type="ECO:0000305" key="2"/>
<keyword id="KW-0472">Membrane</keyword>
<keyword id="KW-1185">Reference proteome</keyword>
<keyword id="KW-0732">Signal</keyword>
<keyword id="KW-0812">Transmembrane</keyword>
<keyword id="KW-1133">Transmembrane helix</keyword>
<protein>
    <recommendedName>
        <fullName>Uncharacterized protein YGL149W</fullName>
    </recommendedName>
</protein>
<sequence>MSINALLYVLSLALLIWTGSVVTLLLLLFFCLFLLFFSLHFFCFTREHVHYTLPPKCHSLKFQFDSIPSSSLSLSPFPFLFFPRLRAVAFASPTLSFFFPI</sequence>
<accession>P53116</accession>
<accession>A0A1S0T080</accession>
<comment type="subcellular location">
    <subcellularLocation>
        <location evidence="2">Membrane</location>
        <topology evidence="2">Single-pass membrane protein</topology>
    </subcellularLocation>
</comment>
<reference key="1">
    <citation type="journal article" date="1995" name="Yeast">
        <title>DNA sequence analysis of a 35 kb segment from Saccharomyces cerevisiae chromosome VII reveals 19 open reading frames including RAD54, ACE1/CUP2, PMR1, RCK1, AMS1 and CAL1/CDC43.</title>
        <authorList>
            <person name="James C.M."/>
            <person name="Indge K.J."/>
            <person name="Oliver S.G."/>
        </authorList>
    </citation>
    <scope>NUCLEOTIDE SEQUENCE [GENOMIC DNA]</scope>
</reference>
<reference key="2">
    <citation type="journal article" date="1997" name="Yeast">
        <title>The sequence of a nearly unclonable 22.8 kb segment on the left arm chromosome VII from Saccharomyces cerevisiae reveals ARO2, RPL9A, TIP1, MRF1 genes and six new open reading frames.</title>
        <authorList>
            <person name="Voet M."/>
            <person name="Defoor E."/>
            <person name="Verhasselt P."/>
            <person name="Riles L."/>
            <person name="Robben J."/>
            <person name="Volckaert G."/>
        </authorList>
    </citation>
    <scope>NUCLEOTIDE SEQUENCE [GENOMIC DNA]</scope>
    <source>
        <strain>ATCC 96604 / S288c / FY1679</strain>
    </source>
</reference>
<reference key="3">
    <citation type="journal article" date="1997" name="Nature">
        <title>The nucleotide sequence of Saccharomyces cerevisiae chromosome VII.</title>
        <authorList>
            <person name="Tettelin H."/>
            <person name="Agostoni-Carbone M.L."/>
            <person name="Albermann K."/>
            <person name="Albers M."/>
            <person name="Arroyo J."/>
            <person name="Backes U."/>
            <person name="Barreiros T."/>
            <person name="Bertani I."/>
            <person name="Bjourson A.J."/>
            <person name="Brueckner M."/>
            <person name="Bruschi C.V."/>
            <person name="Carignani G."/>
            <person name="Castagnoli L."/>
            <person name="Cerdan E."/>
            <person name="Clemente M.L."/>
            <person name="Coblenz A."/>
            <person name="Coglievina M."/>
            <person name="Coissac E."/>
            <person name="Defoor E."/>
            <person name="Del Bino S."/>
            <person name="Delius H."/>
            <person name="Delneri D."/>
            <person name="de Wergifosse P."/>
            <person name="Dujon B."/>
            <person name="Durand P."/>
            <person name="Entian K.-D."/>
            <person name="Eraso P."/>
            <person name="Escribano V."/>
            <person name="Fabiani L."/>
            <person name="Fartmann B."/>
            <person name="Feroli F."/>
            <person name="Feuermann M."/>
            <person name="Frontali L."/>
            <person name="Garcia-Gonzalez M."/>
            <person name="Garcia-Saez M.I."/>
            <person name="Goffeau A."/>
            <person name="Guerreiro P."/>
            <person name="Hani J."/>
            <person name="Hansen M."/>
            <person name="Hebling U."/>
            <person name="Hernandez K."/>
            <person name="Heumann K."/>
            <person name="Hilger F."/>
            <person name="Hofmann B."/>
            <person name="Indge K.J."/>
            <person name="James C.M."/>
            <person name="Klima R."/>
            <person name="Koetter P."/>
            <person name="Kramer B."/>
            <person name="Kramer W."/>
            <person name="Lauquin G."/>
            <person name="Leuther H."/>
            <person name="Louis E.J."/>
            <person name="Maillier E."/>
            <person name="Marconi A."/>
            <person name="Martegani E."/>
            <person name="Mazon M.J."/>
            <person name="Mazzoni C."/>
            <person name="McReynolds A.D.K."/>
            <person name="Melchioretto P."/>
            <person name="Mewes H.-W."/>
            <person name="Minenkova O."/>
            <person name="Mueller-Auer S."/>
            <person name="Nawrocki A."/>
            <person name="Netter P."/>
            <person name="Neu R."/>
            <person name="Nombela C."/>
            <person name="Oliver S.G."/>
            <person name="Panzeri L."/>
            <person name="Paoluzi S."/>
            <person name="Plevani P."/>
            <person name="Portetelle D."/>
            <person name="Portillo F."/>
            <person name="Potier S."/>
            <person name="Purnelle B."/>
            <person name="Rieger M."/>
            <person name="Riles L."/>
            <person name="Rinaldi T."/>
            <person name="Robben J."/>
            <person name="Rodrigues-Pousada C."/>
            <person name="Rodriguez-Belmonte E."/>
            <person name="Rodriguez-Torres A.M."/>
            <person name="Rose M."/>
            <person name="Ruzzi M."/>
            <person name="Saliola M."/>
            <person name="Sanchez-Perez M."/>
            <person name="Schaefer B."/>
            <person name="Schaefer M."/>
            <person name="Scharfe M."/>
            <person name="Schmidheini T."/>
            <person name="Schreer A."/>
            <person name="Skala J."/>
            <person name="Souciet J.-L."/>
            <person name="Steensma H.Y."/>
            <person name="Talla E."/>
            <person name="Thierry A."/>
            <person name="Vandenbol M."/>
            <person name="van der Aart Q.J.M."/>
            <person name="Van Dyck L."/>
            <person name="Vanoni M."/>
            <person name="Verhasselt P."/>
            <person name="Voet M."/>
            <person name="Volckaert G."/>
            <person name="Wambutt R."/>
            <person name="Watson M.D."/>
            <person name="Weber N."/>
            <person name="Wedler E."/>
            <person name="Wedler H."/>
            <person name="Wipfli P."/>
            <person name="Wolf K."/>
            <person name="Wright L.F."/>
            <person name="Zaccaria P."/>
            <person name="Zimmermann M."/>
            <person name="Zollner A."/>
            <person name="Kleine K."/>
        </authorList>
    </citation>
    <scope>NUCLEOTIDE SEQUENCE [LARGE SCALE GENOMIC DNA]</scope>
    <source>
        <strain>ATCC 204508 / S288c</strain>
    </source>
</reference>
<reference key="4">
    <citation type="journal article" date="2014" name="G3 (Bethesda)">
        <title>The reference genome sequence of Saccharomyces cerevisiae: Then and now.</title>
        <authorList>
            <person name="Engel S.R."/>
            <person name="Dietrich F.S."/>
            <person name="Fisk D.G."/>
            <person name="Binkley G."/>
            <person name="Balakrishnan R."/>
            <person name="Costanzo M.C."/>
            <person name="Dwight S.S."/>
            <person name="Hitz B.C."/>
            <person name="Karra K."/>
            <person name="Nash R.S."/>
            <person name="Weng S."/>
            <person name="Wong E.D."/>
            <person name="Lloyd P."/>
            <person name="Skrzypek M.S."/>
            <person name="Miyasato S.R."/>
            <person name="Simison M."/>
            <person name="Cherry J.M."/>
        </authorList>
    </citation>
    <scope>GENOME REANNOTATION</scope>
    <source>
        <strain>ATCC 204508 / S288c</strain>
    </source>
</reference>
<reference key="5">
    <citation type="journal article" date="2007" name="Genome Res.">
        <title>Approaching a complete repository of sequence-verified protein-encoding clones for Saccharomyces cerevisiae.</title>
        <authorList>
            <person name="Hu Y."/>
            <person name="Rolfs A."/>
            <person name="Bhullar B."/>
            <person name="Murthy T.V.S."/>
            <person name="Zhu C."/>
            <person name="Berger M.F."/>
            <person name="Camargo A.A."/>
            <person name="Kelley F."/>
            <person name="McCarron S."/>
            <person name="Jepson D."/>
            <person name="Richardson A."/>
            <person name="Raphael J."/>
            <person name="Moreira D."/>
            <person name="Taycher E."/>
            <person name="Zuo D."/>
            <person name="Mohr S."/>
            <person name="Kane M.F."/>
            <person name="Williamson J."/>
            <person name="Simpson A.J.G."/>
            <person name="Bulyk M.L."/>
            <person name="Harlow E."/>
            <person name="Marsischky G."/>
            <person name="Kolodner R.D."/>
            <person name="LaBaer J."/>
        </authorList>
    </citation>
    <scope>NUCLEOTIDE SEQUENCE [GENOMIC DNA]</scope>
    <source>
        <strain>ATCC 204508 / S288c</strain>
    </source>
</reference>
<dbReference type="EMBL" id="Z48618">
    <property type="status" value="NOT_ANNOTATED_CDS"/>
    <property type="molecule type" value="Genomic_DNA"/>
</dbReference>
<dbReference type="EMBL" id="X99960">
    <property type="protein sequence ID" value="CAA68225.1"/>
    <property type="molecule type" value="Genomic_DNA"/>
</dbReference>
<dbReference type="EMBL" id="Z72672">
    <property type="protein sequence ID" value="CAA96862.1"/>
    <property type="molecule type" value="Genomic_DNA"/>
</dbReference>
<dbReference type="EMBL" id="AY558487">
    <property type="protein sequence ID" value="AAS56813.1"/>
    <property type="molecule type" value="Genomic_DNA"/>
</dbReference>
<dbReference type="EMBL" id="BK006941">
    <property type="protein sequence ID" value="DAA80295.1"/>
    <property type="molecule type" value="Genomic_DNA"/>
</dbReference>
<dbReference type="PIR" id="S60434">
    <property type="entry name" value="S60434"/>
</dbReference>
<dbReference type="RefSeq" id="NP_001335775.1">
    <property type="nucleotide sequence ID" value="NM_001348834.1"/>
</dbReference>
<dbReference type="SMR" id="P53116"/>
<dbReference type="DIP" id="DIP-4527N"/>
<dbReference type="FunCoup" id="P53116">
    <property type="interactions" value="14"/>
</dbReference>
<dbReference type="PaxDb" id="4932-YGL149W"/>
<dbReference type="EnsemblFungi" id="YGL149W_mRNA">
    <property type="protein sequence ID" value="YGL149W"/>
    <property type="gene ID" value="YGL149W"/>
</dbReference>
<dbReference type="GeneID" id="852727"/>
<dbReference type="AGR" id="SGD:S000003117"/>
<dbReference type="SGD" id="S000003117">
    <property type="gene designation" value="YGL149W"/>
</dbReference>
<dbReference type="HOGENOM" id="CLU_135799_0_0_1"/>
<dbReference type="InParanoid" id="P53116"/>
<dbReference type="PRO" id="PR:P53116"/>
<dbReference type="Proteomes" id="UP000002311">
    <property type="component" value="Chromosome VII"/>
</dbReference>
<dbReference type="RNAct" id="P53116">
    <property type="molecule type" value="protein"/>
</dbReference>
<dbReference type="GO" id="GO:0016020">
    <property type="term" value="C:membrane"/>
    <property type="evidence" value="ECO:0007669"/>
    <property type="project" value="UniProtKB-SubCell"/>
</dbReference>
<proteinExistence type="inferred from homology"/>
<name>YGO9_YEAST</name>
<organism>
    <name type="scientific">Saccharomyces cerevisiae (strain ATCC 204508 / S288c)</name>
    <name type="common">Baker's yeast</name>
    <dbReference type="NCBI Taxonomy" id="559292"/>
    <lineage>
        <taxon>Eukaryota</taxon>
        <taxon>Fungi</taxon>
        <taxon>Dikarya</taxon>
        <taxon>Ascomycota</taxon>
        <taxon>Saccharomycotina</taxon>
        <taxon>Saccharomycetes</taxon>
        <taxon>Saccharomycetales</taxon>
        <taxon>Saccharomycetaceae</taxon>
        <taxon>Saccharomyces</taxon>
    </lineage>
</organism>